<accession>Q3YXW5</accession>
<name>GCST_SHISS</name>
<proteinExistence type="inferred from homology"/>
<sequence>MAQQTPLYEQHTLCGARMVDFHGWMMPLHYGSQIDEHHAVRTDAGMFDVSHMTIVDLRGSRTREFLRYLLANDVAKLTKSGKALYSGMLNASGGVIDDLIVYYFTEDFFRLVVNSATREKDLSWITQHAEPFGIEITVRDDLSMIAVQGPNAQAKAATLFNDAQRQAVEGMKPFFGVQAGDLFIATTGYTGEAGYEIALPNEKAADFWRALVEAGVKPCGLGARDTLRLEAGMNLYGQEMDETISPLAANMGWTIAWEPADRDFIGREALEVQREHGTEKLVGLVMTEKGVLRNELPVRFTDAQGNQHEGIITSGTFSPTLGYSIALARVLEGIGETAIVQIRNREMSVKVTKPVFVRNGKAVA</sequence>
<keyword id="KW-0032">Aminotransferase</keyword>
<keyword id="KW-1185">Reference proteome</keyword>
<keyword id="KW-0808">Transferase</keyword>
<organism>
    <name type="scientific">Shigella sonnei (strain Ss046)</name>
    <dbReference type="NCBI Taxonomy" id="300269"/>
    <lineage>
        <taxon>Bacteria</taxon>
        <taxon>Pseudomonadati</taxon>
        <taxon>Pseudomonadota</taxon>
        <taxon>Gammaproteobacteria</taxon>
        <taxon>Enterobacterales</taxon>
        <taxon>Enterobacteriaceae</taxon>
        <taxon>Shigella</taxon>
    </lineage>
</organism>
<reference key="1">
    <citation type="journal article" date="2005" name="Nucleic Acids Res.">
        <title>Genome dynamics and diversity of Shigella species, the etiologic agents of bacillary dysentery.</title>
        <authorList>
            <person name="Yang F."/>
            <person name="Yang J."/>
            <person name="Zhang X."/>
            <person name="Chen L."/>
            <person name="Jiang Y."/>
            <person name="Yan Y."/>
            <person name="Tang X."/>
            <person name="Wang J."/>
            <person name="Xiong Z."/>
            <person name="Dong J."/>
            <person name="Xue Y."/>
            <person name="Zhu Y."/>
            <person name="Xu X."/>
            <person name="Sun L."/>
            <person name="Chen S."/>
            <person name="Nie H."/>
            <person name="Peng J."/>
            <person name="Xu J."/>
            <person name="Wang Y."/>
            <person name="Yuan Z."/>
            <person name="Wen Y."/>
            <person name="Yao Z."/>
            <person name="Shen Y."/>
            <person name="Qiang B."/>
            <person name="Hou Y."/>
            <person name="Yu J."/>
            <person name="Jin Q."/>
        </authorList>
    </citation>
    <scope>NUCLEOTIDE SEQUENCE [LARGE SCALE GENOMIC DNA]</scope>
    <source>
        <strain>Ss046</strain>
    </source>
</reference>
<comment type="function">
    <text evidence="1">The glycine cleavage system catalyzes the degradation of glycine.</text>
</comment>
<comment type="catalytic activity">
    <reaction evidence="1">
        <text>N(6)-[(R)-S(8)-aminomethyldihydrolipoyl]-L-lysyl-[protein] + (6S)-5,6,7,8-tetrahydrofolate = N(6)-[(R)-dihydrolipoyl]-L-lysyl-[protein] + (6R)-5,10-methylene-5,6,7,8-tetrahydrofolate + NH4(+)</text>
        <dbReference type="Rhea" id="RHEA:16945"/>
        <dbReference type="Rhea" id="RHEA-COMP:10475"/>
        <dbReference type="Rhea" id="RHEA-COMP:10492"/>
        <dbReference type="ChEBI" id="CHEBI:15636"/>
        <dbReference type="ChEBI" id="CHEBI:28938"/>
        <dbReference type="ChEBI" id="CHEBI:57453"/>
        <dbReference type="ChEBI" id="CHEBI:83100"/>
        <dbReference type="ChEBI" id="CHEBI:83143"/>
        <dbReference type="EC" id="2.1.2.10"/>
    </reaction>
</comment>
<comment type="subunit">
    <text evidence="1">The glycine cleavage system is composed of four proteins: P, T, L and H.</text>
</comment>
<comment type="similarity">
    <text evidence="1">Belongs to the GcvT family.</text>
</comment>
<evidence type="ECO:0000255" key="1">
    <source>
        <dbReference type="HAMAP-Rule" id="MF_00259"/>
    </source>
</evidence>
<dbReference type="EC" id="2.1.2.10" evidence="1"/>
<dbReference type="EMBL" id="CP000038">
    <property type="protein sequence ID" value="AAZ89647.1"/>
    <property type="molecule type" value="Genomic_DNA"/>
</dbReference>
<dbReference type="RefSeq" id="WP_005155176.1">
    <property type="nucleotide sequence ID" value="NC_007384.1"/>
</dbReference>
<dbReference type="SMR" id="Q3YXW5"/>
<dbReference type="GeneID" id="93779097"/>
<dbReference type="KEGG" id="ssn:SSON_3058"/>
<dbReference type="HOGENOM" id="CLU_007884_10_2_6"/>
<dbReference type="Proteomes" id="UP000002529">
    <property type="component" value="Chromosome"/>
</dbReference>
<dbReference type="GO" id="GO:0005829">
    <property type="term" value="C:cytosol"/>
    <property type="evidence" value="ECO:0007669"/>
    <property type="project" value="TreeGrafter"/>
</dbReference>
<dbReference type="GO" id="GO:0005960">
    <property type="term" value="C:glycine cleavage complex"/>
    <property type="evidence" value="ECO:0007669"/>
    <property type="project" value="InterPro"/>
</dbReference>
<dbReference type="GO" id="GO:0004047">
    <property type="term" value="F:aminomethyltransferase activity"/>
    <property type="evidence" value="ECO:0007669"/>
    <property type="project" value="UniProtKB-UniRule"/>
</dbReference>
<dbReference type="GO" id="GO:0008483">
    <property type="term" value="F:transaminase activity"/>
    <property type="evidence" value="ECO:0007669"/>
    <property type="project" value="UniProtKB-KW"/>
</dbReference>
<dbReference type="GO" id="GO:0019464">
    <property type="term" value="P:glycine decarboxylation via glycine cleavage system"/>
    <property type="evidence" value="ECO:0007669"/>
    <property type="project" value="UniProtKB-UniRule"/>
</dbReference>
<dbReference type="FunFam" id="2.40.30.110:FF:000001">
    <property type="entry name" value="Aminomethyltransferase"/>
    <property type="match status" value="1"/>
</dbReference>
<dbReference type="FunFam" id="3.30.70.1400:FF:000001">
    <property type="entry name" value="Aminomethyltransferase"/>
    <property type="match status" value="1"/>
</dbReference>
<dbReference type="FunFam" id="4.10.1250.10:FF:000001">
    <property type="entry name" value="Aminomethyltransferase"/>
    <property type="match status" value="1"/>
</dbReference>
<dbReference type="Gene3D" id="2.40.30.110">
    <property type="entry name" value="Aminomethyltransferase beta-barrel domains"/>
    <property type="match status" value="1"/>
</dbReference>
<dbReference type="Gene3D" id="3.30.70.1400">
    <property type="entry name" value="Aminomethyltransferase beta-barrel domains"/>
    <property type="match status" value="1"/>
</dbReference>
<dbReference type="Gene3D" id="4.10.1250.10">
    <property type="entry name" value="Aminomethyltransferase fragment"/>
    <property type="match status" value="1"/>
</dbReference>
<dbReference type="Gene3D" id="3.30.1360.120">
    <property type="entry name" value="Probable tRNA modification gtpase trme, domain 1"/>
    <property type="match status" value="1"/>
</dbReference>
<dbReference type="HAMAP" id="MF_00259">
    <property type="entry name" value="GcvT"/>
    <property type="match status" value="1"/>
</dbReference>
<dbReference type="InterPro" id="IPR006223">
    <property type="entry name" value="GCS_T"/>
</dbReference>
<dbReference type="InterPro" id="IPR022903">
    <property type="entry name" value="GCS_T_bac"/>
</dbReference>
<dbReference type="InterPro" id="IPR013977">
    <property type="entry name" value="GCST_C"/>
</dbReference>
<dbReference type="InterPro" id="IPR006222">
    <property type="entry name" value="GCV_T_N"/>
</dbReference>
<dbReference type="InterPro" id="IPR028896">
    <property type="entry name" value="GcvT/YgfZ/DmdA"/>
</dbReference>
<dbReference type="InterPro" id="IPR029043">
    <property type="entry name" value="GcvT/YgfZ_C"/>
</dbReference>
<dbReference type="InterPro" id="IPR027266">
    <property type="entry name" value="TrmE/GcvT_dom1"/>
</dbReference>
<dbReference type="NCBIfam" id="TIGR00528">
    <property type="entry name" value="gcvT"/>
    <property type="match status" value="1"/>
</dbReference>
<dbReference type="NCBIfam" id="NF001567">
    <property type="entry name" value="PRK00389.1"/>
    <property type="match status" value="1"/>
</dbReference>
<dbReference type="PANTHER" id="PTHR43757">
    <property type="entry name" value="AMINOMETHYLTRANSFERASE"/>
    <property type="match status" value="1"/>
</dbReference>
<dbReference type="PANTHER" id="PTHR43757:SF2">
    <property type="entry name" value="AMINOMETHYLTRANSFERASE, MITOCHONDRIAL"/>
    <property type="match status" value="1"/>
</dbReference>
<dbReference type="Pfam" id="PF01571">
    <property type="entry name" value="GCV_T"/>
    <property type="match status" value="1"/>
</dbReference>
<dbReference type="Pfam" id="PF08669">
    <property type="entry name" value="GCV_T_C"/>
    <property type="match status" value="1"/>
</dbReference>
<dbReference type="PIRSF" id="PIRSF006487">
    <property type="entry name" value="GcvT"/>
    <property type="match status" value="1"/>
</dbReference>
<dbReference type="SUPFAM" id="SSF101790">
    <property type="entry name" value="Aminomethyltransferase beta-barrel domain"/>
    <property type="match status" value="1"/>
</dbReference>
<dbReference type="SUPFAM" id="SSF103025">
    <property type="entry name" value="Folate-binding domain"/>
    <property type="match status" value="1"/>
</dbReference>
<feature type="chain" id="PRO_1000047711" description="Aminomethyltransferase">
    <location>
        <begin position="1"/>
        <end position="364"/>
    </location>
</feature>
<protein>
    <recommendedName>
        <fullName evidence="1">Aminomethyltransferase</fullName>
        <ecNumber evidence="1">2.1.2.10</ecNumber>
    </recommendedName>
    <alternativeName>
        <fullName evidence="1">Glycine cleavage system T protein</fullName>
    </alternativeName>
</protein>
<gene>
    <name evidence="1" type="primary">gcvT</name>
    <name type="ordered locus">SSON_3058</name>
</gene>